<evidence type="ECO:0000250" key="1">
    <source>
        <dbReference type="UniProtKB" id="A0A0S4IJL0"/>
    </source>
</evidence>
<evidence type="ECO:0000255" key="2">
    <source>
        <dbReference type="HAMAP-Rule" id="MF_00860"/>
    </source>
</evidence>
<evidence type="ECO:0000303" key="3">
    <source>
    </source>
</evidence>
<evidence type="ECO:0000303" key="4">
    <source>
    </source>
</evidence>
<evidence type="ECO:0000305" key="5"/>
<proteinExistence type="evidence at transcript level"/>
<sequence>MASSIVSSAAAATRSNVAQASMVAPFTGLKSAASFPVTKKNNNVDITSLASNGGRVRCMQVWPPINMKKYETLSYLPDLSDEQLLSEIEYLLKNGWVPCLEFETERGFVYRENNSSPGYYDGRYWTMWKLPMFGCTDATQVLAEVQEAKKAYPQAWVRIIGFDNVRQVQCISFIAYKPEGF</sequence>
<keyword id="KW-0051">Antiviral defense</keyword>
<keyword id="KW-0113">Calvin cycle</keyword>
<keyword id="KW-0120">Carbon dioxide fixation</keyword>
<keyword id="KW-0965">Cell junction</keyword>
<keyword id="KW-0150">Chloroplast</keyword>
<keyword id="KW-0945">Host-virus interaction</keyword>
<keyword id="KW-0601">Photorespiration</keyword>
<keyword id="KW-0602">Photosynthesis</keyword>
<keyword id="KW-0934">Plastid</keyword>
<keyword id="KW-1185">Reference proteome</keyword>
<keyword id="KW-0809">Transit peptide</keyword>
<organism>
    <name type="scientific">Solanum lycopersicum</name>
    <name type="common">Tomato</name>
    <name type="synonym">Lycopersicon esculentum</name>
    <dbReference type="NCBI Taxonomy" id="4081"/>
    <lineage>
        <taxon>Eukaryota</taxon>
        <taxon>Viridiplantae</taxon>
        <taxon>Streptophyta</taxon>
        <taxon>Embryophyta</taxon>
        <taxon>Tracheophyta</taxon>
        <taxon>Spermatophyta</taxon>
        <taxon>Magnoliopsida</taxon>
        <taxon>eudicotyledons</taxon>
        <taxon>Gunneridae</taxon>
        <taxon>Pentapetalae</taxon>
        <taxon>asterids</taxon>
        <taxon>lamiids</taxon>
        <taxon>Solanales</taxon>
        <taxon>Solanaceae</taxon>
        <taxon>Solanoideae</taxon>
        <taxon>Solaneae</taxon>
        <taxon>Solanum</taxon>
        <taxon>Solanum subgen. Lycopersicon</taxon>
    </lineage>
</organism>
<comment type="function">
    <text evidence="1 2">RuBisCO catalyzes two reactions: the carboxylation of D-ribulose 1,5-bisphosphate, the primary event in carbon dioxide fixation, as well as the oxidative fragmentation of the pentose substrate. Both reactions occur simultaneously and in competition at the same active site. Although the small subunit is not catalytic it is essential for maximal activity. Involved in antiviral defenses (By similarity).</text>
</comment>
<comment type="subunit">
    <text evidence="5">(Microbial infection) Binds to tobamovirus movement protein; this interaction seems required for viral systemic movement.</text>
</comment>
<comment type="subunit">
    <text evidence="2">Heterohexadecamer of 8 large and 8 small subunits.</text>
</comment>
<comment type="subcellular location">
    <subcellularLocation>
        <location evidence="2">Plastid</location>
        <location evidence="2">Chloroplast</location>
    </subcellularLocation>
</comment>
<comment type="subcellular location">
    <subcellularLocation>
        <location evidence="1">Cell junction</location>
        <location evidence="1">Plasmodesma</location>
    </subcellularLocation>
    <text evidence="1">(Microbial infection) May be present in virus replication complexes (VRCs) of tobamovirus infected cells.</text>
</comment>
<comment type="miscellaneous">
    <text evidence="2">The basic functional RuBisCO is composed of a large chain homodimer in a 'head-to-tail' conformation. In form I RuBisCO this homodimer is arranged in a barrel-like tetramer with the small subunits forming a tetrameric 'cap' on each end of the 'barrel'.</text>
</comment>
<comment type="similarity">
    <text evidence="2">Belongs to the RuBisCO small chain family.</text>
</comment>
<feature type="transit peptide" description="Chloroplast" evidence="2">
    <location>
        <begin position="1"/>
        <end position="57"/>
    </location>
</feature>
<feature type="chain" id="PRO_0000031518" description="Ribulose bisphosphate carboxylase small subunit, chloroplastic 1" evidence="2">
    <location>
        <begin position="58"/>
        <end position="181"/>
    </location>
</feature>
<feature type="sequence conflict" description="In Ref. 1; AAA34191." evidence="5" ref="1">
    <original>L</original>
    <variation>F</variation>
    <location>
        <position position="79"/>
    </location>
</feature>
<dbReference type="EMBL" id="M15235">
    <property type="protein sequence ID" value="AAA34191.1"/>
    <property type="molecule type" value="mRNA"/>
</dbReference>
<dbReference type="EMBL" id="M13542">
    <property type="protein sequence ID" value="AAA34188.1"/>
    <property type="molecule type" value="Genomic_DNA"/>
</dbReference>
<dbReference type="EMBL" id="X05982">
    <property type="protein sequence ID" value="CAA29400.1"/>
    <property type="molecule type" value="Genomic_DNA"/>
</dbReference>
<dbReference type="EMBL" id="X66068">
    <property type="protein sequence ID" value="CAA46868.1"/>
    <property type="molecule type" value="Genomic_DNA"/>
</dbReference>
<dbReference type="PIR" id="S02364">
    <property type="entry name" value="RKTOS1"/>
</dbReference>
<dbReference type="RefSeq" id="NP_001295872.1">
    <property type="nucleotide sequence ID" value="NM_001308943.1"/>
</dbReference>
<dbReference type="SMR" id="P08706"/>
<dbReference type="FunCoup" id="P08706">
    <property type="interactions" value="1438"/>
</dbReference>
<dbReference type="STRING" id="4081.P08706"/>
<dbReference type="PaxDb" id="4081-Solyc02g063150.2.1"/>
<dbReference type="EnsemblPlants" id="Solyc02g063150.3.1">
    <property type="protein sequence ID" value="Solyc02g063150.3.1"/>
    <property type="gene ID" value="Solyc02g063150.3"/>
</dbReference>
<dbReference type="GeneID" id="543973"/>
<dbReference type="Gramene" id="Solyc02g063150.3.1">
    <property type="protein sequence ID" value="Solyc02g063150.3.1"/>
    <property type="gene ID" value="Solyc02g063150.3"/>
</dbReference>
<dbReference type="KEGG" id="sly:543973"/>
<dbReference type="eggNOG" id="ENOG502QT0M">
    <property type="taxonomic scope" value="Eukaryota"/>
</dbReference>
<dbReference type="HOGENOM" id="CLU_098114_1_0_1"/>
<dbReference type="InParanoid" id="P08706"/>
<dbReference type="OMA" id="IRNNWIP"/>
<dbReference type="OrthoDB" id="2013936at2759"/>
<dbReference type="PhylomeDB" id="P08706"/>
<dbReference type="Proteomes" id="UP000004994">
    <property type="component" value="Chromosome 2"/>
</dbReference>
<dbReference type="GO" id="GO:0009507">
    <property type="term" value="C:chloroplast"/>
    <property type="evidence" value="ECO:0007669"/>
    <property type="project" value="UniProtKB-SubCell"/>
</dbReference>
<dbReference type="GO" id="GO:0009506">
    <property type="term" value="C:plasmodesma"/>
    <property type="evidence" value="ECO:0007669"/>
    <property type="project" value="UniProtKB-SubCell"/>
</dbReference>
<dbReference type="GO" id="GO:0016984">
    <property type="term" value="F:ribulose-bisphosphate carboxylase activity"/>
    <property type="evidence" value="ECO:0007669"/>
    <property type="project" value="UniProtKB-UniRule"/>
</dbReference>
<dbReference type="GO" id="GO:0051607">
    <property type="term" value="P:defense response to virus"/>
    <property type="evidence" value="ECO:0007669"/>
    <property type="project" value="UniProtKB-KW"/>
</dbReference>
<dbReference type="GO" id="GO:0009853">
    <property type="term" value="P:photorespiration"/>
    <property type="evidence" value="ECO:0007669"/>
    <property type="project" value="UniProtKB-KW"/>
</dbReference>
<dbReference type="GO" id="GO:0019253">
    <property type="term" value="P:reductive pentose-phosphate cycle"/>
    <property type="evidence" value="ECO:0007669"/>
    <property type="project" value="UniProtKB-UniRule"/>
</dbReference>
<dbReference type="CDD" id="cd03527">
    <property type="entry name" value="RuBisCO_small"/>
    <property type="match status" value="1"/>
</dbReference>
<dbReference type="FunFam" id="3.30.190.10:FF:000001">
    <property type="entry name" value="Ribulose bisphosphate carboxylase small chain, chloroplastic"/>
    <property type="match status" value="1"/>
</dbReference>
<dbReference type="Gene3D" id="3.30.190.10">
    <property type="entry name" value="Ribulose bisphosphate carboxylase, small subunit"/>
    <property type="match status" value="1"/>
</dbReference>
<dbReference type="HAMAP" id="MF_00859">
    <property type="entry name" value="RuBisCO_S_bact"/>
    <property type="match status" value="1"/>
</dbReference>
<dbReference type="InterPro" id="IPR024681">
    <property type="entry name" value="RuBisCO_ssu"/>
</dbReference>
<dbReference type="InterPro" id="IPR000894">
    <property type="entry name" value="RuBisCO_ssu_dom"/>
</dbReference>
<dbReference type="InterPro" id="IPR024680">
    <property type="entry name" value="RuBisCO_ssu_N"/>
</dbReference>
<dbReference type="InterPro" id="IPR036385">
    <property type="entry name" value="RuBisCO_ssu_sf"/>
</dbReference>
<dbReference type="PANTHER" id="PTHR31262">
    <property type="entry name" value="RIBULOSE BISPHOSPHATE CARBOXYLASE SMALL CHAIN 1, CHLOROPLASTIC"/>
    <property type="match status" value="1"/>
</dbReference>
<dbReference type="PANTHER" id="PTHR31262:SF14">
    <property type="entry name" value="RIBULOSE BISPHOSPHATE CARBOXYLASE SMALL SUBUNIT, CHLOROPLASTIC 1"/>
    <property type="match status" value="1"/>
</dbReference>
<dbReference type="Pfam" id="PF12338">
    <property type="entry name" value="RbcS"/>
    <property type="match status" value="1"/>
</dbReference>
<dbReference type="Pfam" id="PF00101">
    <property type="entry name" value="RuBisCO_small"/>
    <property type="match status" value="1"/>
</dbReference>
<dbReference type="PRINTS" id="PR00152">
    <property type="entry name" value="RUBISCOSMALL"/>
</dbReference>
<dbReference type="SMART" id="SM00961">
    <property type="entry name" value="RuBisCO_small"/>
    <property type="match status" value="1"/>
</dbReference>
<dbReference type="SUPFAM" id="SSF55239">
    <property type="entry name" value="RuBisCO, small subunit"/>
    <property type="match status" value="1"/>
</dbReference>
<reference key="1">
    <citation type="journal article" date="1986" name="Gene">
        <title>Nucleotide sequence and molecular evolution of two tomato genes encoding the small subunit of ribulose-1,5-bisphosphate carboxylase.</title>
        <authorList>
            <person name="McKnight T.D."/>
            <person name="Alexander D.C."/>
            <person name="Babcock M.S."/>
            <person name="Simpson R.B."/>
        </authorList>
    </citation>
    <scope>NUCLEOTIDE SEQUENCE [MRNA] (LESS 17)</scope>
    <source>
        <strain>cv. VF36</strain>
    </source>
</reference>
<reference key="2">
    <citation type="journal article" date="1986" name="Proc. Natl. Acad. Sci. U.S.A.">
        <title>Evidence for selection as a mechanism in the concerted evolution of Lycopersicon esculentum (tomato) genes encoding the small subunit of ribulose-1,5-bisphosphate carboxylase/oxygenase.</title>
        <authorList>
            <person name="Pichersky E."/>
            <person name="Bernatzky R."/>
            <person name="Tanksley S.D."/>
            <person name="Cashmore A.R."/>
        </authorList>
    </citation>
    <scope>NUCLEOTIDE SEQUENCE [GENOMIC DNA] (RBCS-1)</scope>
</reference>
<reference key="3">
    <citation type="journal article" date="1987" name="Mol. Gen. Genet.">
        <title>Genomic organization, sequence analysis and expression of all five genes encoding the small subunit of ribulose-1,5-bisphosphate carboxylase/oxygenase from tomato.</title>
        <authorList>
            <person name="Sugita M."/>
            <person name="Manzara T."/>
            <person name="Pichersky E."/>
            <person name="Cashmore A."/>
            <person name="Gruissem W."/>
        </authorList>
    </citation>
    <scope>NUCLEOTIDE SEQUENCE (RBCS-1)</scope>
    <source>
        <strain>cv. VFNT Cherry LA1221</strain>
    </source>
</reference>
<reference key="4">
    <citation type="journal article" date="1993" name="Plant Mol. Biol.">
        <title>Developmental and organ-specific changes in DNA-protein interactions in the tomato rbcS1, rbcS2 and rbcS3A promoter regions.</title>
        <authorList>
            <person name="Manzara T."/>
            <person name="Carrasco P."/>
            <person name="Gruissem W."/>
        </authorList>
    </citation>
    <scope>NUCLEOTIDE SEQUENCE OF 1-20 (RBCS-1)</scope>
    <source>
        <strain>cv. VFNT Cherry LA1221</strain>
        <tissue>Root</tissue>
    </source>
</reference>
<protein>
    <recommendedName>
        <fullName evidence="2 3">Ribulose bisphosphate carboxylase small subunit, chloroplastic 1</fullName>
        <shortName evidence="2 3">RuBisCO small subunit 1</shortName>
    </recommendedName>
    <alternativeName>
        <fullName evidence="4">LESS 17</fullName>
    </alternativeName>
</protein>
<gene>
    <name evidence="2" type="primary">RBCS1</name>
    <name evidence="3" type="synonym">RBCS-1</name>
</gene>
<name>RBS1_SOLLC</name>
<accession>P08706</accession>